<accession>P67526</accession>
<accession>Q99UB8</accession>
<organism>
    <name type="scientific">Staphylococcus aureus (strain Mu50 / ATCC 700699)</name>
    <dbReference type="NCBI Taxonomy" id="158878"/>
    <lineage>
        <taxon>Bacteria</taxon>
        <taxon>Bacillati</taxon>
        <taxon>Bacillota</taxon>
        <taxon>Bacilli</taxon>
        <taxon>Bacillales</taxon>
        <taxon>Staphylococcaceae</taxon>
        <taxon>Staphylococcus</taxon>
    </lineage>
</organism>
<feature type="initiator methionine" description="Removed" evidence="1">
    <location>
        <position position="1"/>
    </location>
</feature>
<feature type="chain" id="PRO_0000209541" description="Probable tautomerase SAV1363">
    <location>
        <begin position="2"/>
        <end position="61"/>
    </location>
</feature>
<feature type="active site" description="Proton acceptor; via imino nitrogen" evidence="1">
    <location>
        <position position="2"/>
    </location>
</feature>
<name>Y1363_STAAM</name>
<gene>
    <name type="ordered locus">SAV1363</name>
</gene>
<evidence type="ECO:0000250" key="1"/>
<evidence type="ECO:0000305" key="2"/>
<protein>
    <recommendedName>
        <fullName>Probable tautomerase SAV1363</fullName>
        <ecNumber>5.3.2.-</ecNumber>
    </recommendedName>
</protein>
<keyword id="KW-0413">Isomerase</keyword>
<sequence>MPIVNVKLLEGRSDEQLKNLVSEVTDAVEKTTGANRQAIHVVIEEMKPNHYGVAGVRKSDQ</sequence>
<proteinExistence type="inferred from homology"/>
<dbReference type="EC" id="5.3.2.-"/>
<dbReference type="EMBL" id="BA000017">
    <property type="protein sequence ID" value="BAB57525.1"/>
    <property type="status" value="ALT_INIT"/>
    <property type="molecule type" value="Genomic_DNA"/>
</dbReference>
<dbReference type="RefSeq" id="WP_001123276.1">
    <property type="nucleotide sequence ID" value="NC_002758.2"/>
</dbReference>
<dbReference type="SMR" id="P67526"/>
<dbReference type="KEGG" id="sav:SAV1363"/>
<dbReference type="HOGENOM" id="CLU_148073_5_1_9"/>
<dbReference type="Proteomes" id="UP000002481">
    <property type="component" value="Chromosome"/>
</dbReference>
<dbReference type="GO" id="GO:0016853">
    <property type="term" value="F:isomerase activity"/>
    <property type="evidence" value="ECO:0007669"/>
    <property type="project" value="UniProtKB-KW"/>
</dbReference>
<dbReference type="CDD" id="cd00491">
    <property type="entry name" value="4Oxalocrotonate_Tautomerase"/>
    <property type="match status" value="1"/>
</dbReference>
<dbReference type="Gene3D" id="3.30.429.10">
    <property type="entry name" value="Macrophage Migration Inhibitory Factor"/>
    <property type="match status" value="1"/>
</dbReference>
<dbReference type="InterPro" id="IPR018191">
    <property type="entry name" value="4-OT"/>
</dbReference>
<dbReference type="InterPro" id="IPR004370">
    <property type="entry name" value="4-OT-like_dom"/>
</dbReference>
<dbReference type="InterPro" id="IPR014347">
    <property type="entry name" value="Tautomerase/MIF_sf"/>
</dbReference>
<dbReference type="NCBIfam" id="NF002571">
    <property type="entry name" value="PRK02220.1"/>
    <property type="match status" value="1"/>
</dbReference>
<dbReference type="NCBIfam" id="TIGR00013">
    <property type="entry name" value="taut"/>
    <property type="match status" value="1"/>
</dbReference>
<dbReference type="PANTHER" id="PTHR35530:SF1">
    <property type="entry name" value="2-HYDROXYMUCONATE TAUTOMERASE"/>
    <property type="match status" value="1"/>
</dbReference>
<dbReference type="PANTHER" id="PTHR35530">
    <property type="entry name" value="TAUTOMERASE-RELATED"/>
    <property type="match status" value="1"/>
</dbReference>
<dbReference type="Pfam" id="PF01361">
    <property type="entry name" value="Tautomerase"/>
    <property type="match status" value="1"/>
</dbReference>
<dbReference type="SUPFAM" id="SSF55331">
    <property type="entry name" value="Tautomerase/MIF"/>
    <property type="match status" value="1"/>
</dbReference>
<reference key="1">
    <citation type="journal article" date="2001" name="Lancet">
        <title>Whole genome sequencing of meticillin-resistant Staphylococcus aureus.</title>
        <authorList>
            <person name="Kuroda M."/>
            <person name="Ohta T."/>
            <person name="Uchiyama I."/>
            <person name="Baba T."/>
            <person name="Yuzawa H."/>
            <person name="Kobayashi I."/>
            <person name="Cui L."/>
            <person name="Oguchi A."/>
            <person name="Aoki K."/>
            <person name="Nagai Y."/>
            <person name="Lian J.-Q."/>
            <person name="Ito T."/>
            <person name="Kanamori M."/>
            <person name="Matsumaru H."/>
            <person name="Maruyama A."/>
            <person name="Murakami H."/>
            <person name="Hosoyama A."/>
            <person name="Mizutani-Ui Y."/>
            <person name="Takahashi N.K."/>
            <person name="Sawano T."/>
            <person name="Inoue R."/>
            <person name="Kaito C."/>
            <person name="Sekimizu K."/>
            <person name="Hirakawa H."/>
            <person name="Kuhara S."/>
            <person name="Goto S."/>
            <person name="Yabuzaki J."/>
            <person name="Kanehisa M."/>
            <person name="Yamashita A."/>
            <person name="Oshima K."/>
            <person name="Furuya K."/>
            <person name="Yoshino C."/>
            <person name="Shiba T."/>
            <person name="Hattori M."/>
            <person name="Ogasawara N."/>
            <person name="Hayashi H."/>
            <person name="Hiramatsu K."/>
        </authorList>
    </citation>
    <scope>NUCLEOTIDE SEQUENCE [LARGE SCALE GENOMIC DNA]</scope>
    <source>
        <strain>Mu50 / ATCC 700699</strain>
    </source>
</reference>
<comment type="similarity">
    <text evidence="2">Belongs to the 4-oxalocrotonate tautomerase family.</text>
</comment>
<comment type="sequence caution" evidence="2">
    <conflict type="erroneous initiation">
        <sequence resource="EMBL-CDS" id="BAB57525"/>
    </conflict>
</comment>